<sequence>MGRNKKKRDGDDRRQRLILSFDEEKRREYLTGFHKRKVERKKAAIEEIKQRLKEEQKKLREERHQEYLKMLAEREEALEEADELDRLVTAKTESVQYDHPNHTVTVTTISDLDLSGARLLGLPTPEQGAGSGPEEEVSSMEKPTRALPRKSRDPLLSQRISSLTASLHAHSRKKVKKKRLRRAQDTTKKPPSATRTSKTRRRRLTGKARHSGE</sequence>
<comment type="function">
    <text evidence="2">Multifunctional RNA binding protein that plays a role in RNA metabolism and DNA maintenance. Participates in the resolution of DNA stress and the maintenance of genome integrity by localizing to sites of DNA insults. Also plays a role in proper nucleolar organization by limiting nucleolar size and regulating nucleolar number. Mechanistically, regulates the nucleolar levels of fibrillarin and nucleolin, two key players in pre-rRNA processing and ribosome assembly.</text>
</comment>
<comment type="subunit">
    <text evidence="1">Interacts with KIAA1191.</text>
</comment>
<comment type="subcellular location">
    <subcellularLocation>
        <location evidence="2">Nucleus</location>
        <location evidence="2">Nucleolus</location>
    </subcellularLocation>
    <subcellularLocation>
        <location evidence="2">Nucleus</location>
    </subcellularLocation>
    <subcellularLocation>
        <location evidence="2">Cytoplasm</location>
    </subcellularLocation>
</comment>
<comment type="similarity">
    <text evidence="5">Belongs to the RRP17 family.</text>
</comment>
<keyword id="KW-0175">Coiled coil</keyword>
<keyword id="KW-0963">Cytoplasm</keyword>
<keyword id="KW-0539">Nucleus</keyword>
<keyword id="KW-1185">Reference proteome</keyword>
<keyword id="KW-0694">RNA-binding</keyword>
<keyword id="KW-0699">rRNA-binding</keyword>
<feature type="chain" id="PRO_0000271206" description="Nucleolar protein 12">
    <location>
        <begin position="1"/>
        <end position="213"/>
    </location>
</feature>
<feature type="region of interest" description="Disordered" evidence="4">
    <location>
        <begin position="117"/>
        <end position="213"/>
    </location>
</feature>
<feature type="coiled-coil region" evidence="3">
    <location>
        <begin position="32"/>
        <end position="95"/>
    </location>
</feature>
<feature type="compositionally biased region" description="Basic residues" evidence="4">
    <location>
        <begin position="169"/>
        <end position="181"/>
    </location>
</feature>
<feature type="compositionally biased region" description="Basic residues" evidence="4">
    <location>
        <begin position="197"/>
        <end position="213"/>
    </location>
</feature>
<dbReference type="EMBL" id="BC112500">
    <property type="protein sequence ID" value="AAI12501.1"/>
    <property type="molecule type" value="mRNA"/>
</dbReference>
<dbReference type="RefSeq" id="NP_001040022.1">
    <property type="nucleotide sequence ID" value="NM_001046557.2"/>
</dbReference>
<dbReference type="SMR" id="Q2KIV0"/>
<dbReference type="FunCoup" id="Q2KIV0">
    <property type="interactions" value="1307"/>
</dbReference>
<dbReference type="STRING" id="9913.ENSBTAP00000067227"/>
<dbReference type="PaxDb" id="9913-ENSBTAP00000020084"/>
<dbReference type="GeneID" id="615252"/>
<dbReference type="KEGG" id="bta:615252"/>
<dbReference type="CTD" id="79159"/>
<dbReference type="VEuPathDB" id="HostDB:ENSBTAG00000051118"/>
<dbReference type="eggNOG" id="KOG4709">
    <property type="taxonomic scope" value="Eukaryota"/>
</dbReference>
<dbReference type="HOGENOM" id="CLU_111183_0_0_1"/>
<dbReference type="InParanoid" id="Q2KIV0"/>
<dbReference type="OMA" id="LHMHSRK"/>
<dbReference type="OrthoDB" id="551633at2759"/>
<dbReference type="TreeFam" id="TF323855"/>
<dbReference type="CD-CODE" id="D7FE2080">
    <property type="entry name" value="Nucleolus"/>
</dbReference>
<dbReference type="Proteomes" id="UP000009136">
    <property type="component" value="Chromosome 5"/>
</dbReference>
<dbReference type="Bgee" id="ENSBTAG00000051118">
    <property type="expression patterns" value="Expressed in oocyte and 103 other cell types or tissues"/>
</dbReference>
<dbReference type="GO" id="GO:0005737">
    <property type="term" value="C:cytoplasm"/>
    <property type="evidence" value="ECO:0007669"/>
    <property type="project" value="UniProtKB-SubCell"/>
</dbReference>
<dbReference type="GO" id="GO:0005730">
    <property type="term" value="C:nucleolus"/>
    <property type="evidence" value="ECO:0000318"/>
    <property type="project" value="GO_Central"/>
</dbReference>
<dbReference type="GO" id="GO:0042802">
    <property type="term" value="F:identical protein binding"/>
    <property type="evidence" value="ECO:0007669"/>
    <property type="project" value="Ensembl"/>
</dbReference>
<dbReference type="GO" id="GO:0019843">
    <property type="term" value="F:rRNA binding"/>
    <property type="evidence" value="ECO:0000318"/>
    <property type="project" value="GO_Central"/>
</dbReference>
<dbReference type="InterPro" id="IPR019186">
    <property type="entry name" value="Nucleolar_protein_12"/>
</dbReference>
<dbReference type="PANTHER" id="PTHR14577">
    <property type="entry name" value="NUCLEOLAR PROTEIN 12"/>
    <property type="match status" value="1"/>
</dbReference>
<dbReference type="PANTHER" id="PTHR14577:SF0">
    <property type="entry name" value="NUCLEOLAR PROTEIN 12"/>
    <property type="match status" value="1"/>
</dbReference>
<dbReference type="Pfam" id="PF09805">
    <property type="entry name" value="Nop25"/>
    <property type="match status" value="1"/>
</dbReference>
<protein>
    <recommendedName>
        <fullName>Nucleolar protein 12</fullName>
    </recommendedName>
</protein>
<gene>
    <name type="primary">NOL12</name>
</gene>
<reference key="1">
    <citation type="submission" date="2006-01" db="EMBL/GenBank/DDBJ databases">
        <authorList>
            <consortium name="NIH - Mammalian Gene Collection (MGC) project"/>
        </authorList>
    </citation>
    <scope>NUCLEOTIDE SEQUENCE [LARGE SCALE MRNA]</scope>
    <source>
        <strain>Hereford</strain>
        <tissue>Testis</tissue>
    </source>
</reference>
<proteinExistence type="evidence at transcript level"/>
<organism>
    <name type="scientific">Bos taurus</name>
    <name type="common">Bovine</name>
    <dbReference type="NCBI Taxonomy" id="9913"/>
    <lineage>
        <taxon>Eukaryota</taxon>
        <taxon>Metazoa</taxon>
        <taxon>Chordata</taxon>
        <taxon>Craniata</taxon>
        <taxon>Vertebrata</taxon>
        <taxon>Euteleostomi</taxon>
        <taxon>Mammalia</taxon>
        <taxon>Eutheria</taxon>
        <taxon>Laurasiatheria</taxon>
        <taxon>Artiodactyla</taxon>
        <taxon>Ruminantia</taxon>
        <taxon>Pecora</taxon>
        <taxon>Bovidae</taxon>
        <taxon>Bovinae</taxon>
        <taxon>Bos</taxon>
    </lineage>
</organism>
<name>NOL12_BOVIN</name>
<accession>Q2KIV0</accession>
<evidence type="ECO:0000250" key="1"/>
<evidence type="ECO:0000250" key="2">
    <source>
        <dbReference type="UniProtKB" id="Q9UGY1"/>
    </source>
</evidence>
<evidence type="ECO:0000255" key="3"/>
<evidence type="ECO:0000256" key="4">
    <source>
        <dbReference type="SAM" id="MobiDB-lite"/>
    </source>
</evidence>
<evidence type="ECO:0000305" key="5"/>